<gene>
    <name evidence="1" type="primary">dapA</name>
    <name type="ordered locus">Dvul_1296</name>
</gene>
<dbReference type="EC" id="4.3.3.7" evidence="1"/>
<dbReference type="EMBL" id="CP000527">
    <property type="protein sequence ID" value="ABM28315.1"/>
    <property type="molecule type" value="Genomic_DNA"/>
</dbReference>
<dbReference type="RefSeq" id="WP_010939154.1">
    <property type="nucleotide sequence ID" value="NC_008751.1"/>
</dbReference>
<dbReference type="SMR" id="A1VCZ9"/>
<dbReference type="KEGG" id="dvl:Dvul_1296"/>
<dbReference type="HOGENOM" id="CLU_049343_7_1_7"/>
<dbReference type="UniPathway" id="UPA00034">
    <property type="reaction ID" value="UER00017"/>
</dbReference>
<dbReference type="Proteomes" id="UP000009173">
    <property type="component" value="Chromosome"/>
</dbReference>
<dbReference type="GO" id="GO:0005829">
    <property type="term" value="C:cytosol"/>
    <property type="evidence" value="ECO:0007669"/>
    <property type="project" value="TreeGrafter"/>
</dbReference>
<dbReference type="GO" id="GO:0008840">
    <property type="term" value="F:4-hydroxy-tetrahydrodipicolinate synthase activity"/>
    <property type="evidence" value="ECO:0007669"/>
    <property type="project" value="UniProtKB-UniRule"/>
</dbReference>
<dbReference type="GO" id="GO:0019877">
    <property type="term" value="P:diaminopimelate biosynthetic process"/>
    <property type="evidence" value="ECO:0007669"/>
    <property type="project" value="UniProtKB-UniRule"/>
</dbReference>
<dbReference type="GO" id="GO:0009089">
    <property type="term" value="P:lysine biosynthetic process via diaminopimelate"/>
    <property type="evidence" value="ECO:0007669"/>
    <property type="project" value="UniProtKB-UniRule"/>
</dbReference>
<dbReference type="CDD" id="cd00950">
    <property type="entry name" value="DHDPS"/>
    <property type="match status" value="1"/>
</dbReference>
<dbReference type="Gene3D" id="3.20.20.70">
    <property type="entry name" value="Aldolase class I"/>
    <property type="match status" value="1"/>
</dbReference>
<dbReference type="HAMAP" id="MF_00418">
    <property type="entry name" value="DapA"/>
    <property type="match status" value="1"/>
</dbReference>
<dbReference type="InterPro" id="IPR013785">
    <property type="entry name" value="Aldolase_TIM"/>
</dbReference>
<dbReference type="InterPro" id="IPR005263">
    <property type="entry name" value="DapA"/>
</dbReference>
<dbReference type="InterPro" id="IPR002220">
    <property type="entry name" value="DapA-like"/>
</dbReference>
<dbReference type="InterPro" id="IPR020625">
    <property type="entry name" value="Schiff_base-form_aldolases_AS"/>
</dbReference>
<dbReference type="InterPro" id="IPR020624">
    <property type="entry name" value="Schiff_base-form_aldolases_CS"/>
</dbReference>
<dbReference type="NCBIfam" id="TIGR00674">
    <property type="entry name" value="dapA"/>
    <property type="match status" value="1"/>
</dbReference>
<dbReference type="PANTHER" id="PTHR12128:SF66">
    <property type="entry name" value="4-HYDROXY-2-OXOGLUTARATE ALDOLASE, MITOCHONDRIAL"/>
    <property type="match status" value="1"/>
</dbReference>
<dbReference type="PANTHER" id="PTHR12128">
    <property type="entry name" value="DIHYDRODIPICOLINATE SYNTHASE"/>
    <property type="match status" value="1"/>
</dbReference>
<dbReference type="Pfam" id="PF00701">
    <property type="entry name" value="DHDPS"/>
    <property type="match status" value="1"/>
</dbReference>
<dbReference type="PIRSF" id="PIRSF001365">
    <property type="entry name" value="DHDPS"/>
    <property type="match status" value="1"/>
</dbReference>
<dbReference type="PRINTS" id="PR00146">
    <property type="entry name" value="DHPICSNTHASE"/>
</dbReference>
<dbReference type="SMART" id="SM01130">
    <property type="entry name" value="DHDPS"/>
    <property type="match status" value="1"/>
</dbReference>
<dbReference type="SUPFAM" id="SSF51569">
    <property type="entry name" value="Aldolase"/>
    <property type="match status" value="1"/>
</dbReference>
<dbReference type="PROSITE" id="PS00665">
    <property type="entry name" value="DHDPS_1"/>
    <property type="match status" value="1"/>
</dbReference>
<dbReference type="PROSITE" id="PS00666">
    <property type="entry name" value="DHDPS_2"/>
    <property type="match status" value="1"/>
</dbReference>
<feature type="chain" id="PRO_0000340948" description="4-hydroxy-tetrahydrodipicolinate synthase">
    <location>
        <begin position="1"/>
        <end position="292"/>
    </location>
</feature>
<feature type="active site" description="Proton donor/acceptor" evidence="1">
    <location>
        <position position="133"/>
    </location>
</feature>
<feature type="active site" description="Schiff-base intermediate with substrate" evidence="1">
    <location>
        <position position="162"/>
    </location>
</feature>
<feature type="binding site" evidence="1">
    <location>
        <position position="45"/>
    </location>
    <ligand>
        <name>pyruvate</name>
        <dbReference type="ChEBI" id="CHEBI:15361"/>
    </ligand>
</feature>
<feature type="binding site" evidence="1">
    <location>
        <position position="204"/>
    </location>
    <ligand>
        <name>pyruvate</name>
        <dbReference type="ChEBI" id="CHEBI:15361"/>
    </ligand>
</feature>
<feature type="site" description="Part of a proton relay during catalysis" evidence="1">
    <location>
        <position position="44"/>
    </location>
</feature>
<feature type="site" description="Part of a proton relay during catalysis" evidence="1">
    <location>
        <position position="107"/>
    </location>
</feature>
<accession>A1VCZ9</accession>
<organism>
    <name type="scientific">Nitratidesulfovibrio vulgaris (strain DP4)</name>
    <name type="common">Desulfovibrio vulgaris</name>
    <dbReference type="NCBI Taxonomy" id="391774"/>
    <lineage>
        <taxon>Bacteria</taxon>
        <taxon>Pseudomonadati</taxon>
        <taxon>Thermodesulfobacteriota</taxon>
        <taxon>Desulfovibrionia</taxon>
        <taxon>Desulfovibrionales</taxon>
        <taxon>Desulfovibrionaceae</taxon>
        <taxon>Nitratidesulfovibrio</taxon>
    </lineage>
</organism>
<keyword id="KW-0028">Amino-acid biosynthesis</keyword>
<keyword id="KW-0963">Cytoplasm</keyword>
<keyword id="KW-0220">Diaminopimelate biosynthesis</keyword>
<keyword id="KW-0456">Lyase</keyword>
<keyword id="KW-0457">Lysine biosynthesis</keyword>
<keyword id="KW-0704">Schiff base</keyword>
<reference key="1">
    <citation type="journal article" date="2009" name="Environ. Microbiol.">
        <title>Contribution of mobile genetic elements to Desulfovibrio vulgaris genome plasticity.</title>
        <authorList>
            <person name="Walker C.B."/>
            <person name="Stolyar S."/>
            <person name="Chivian D."/>
            <person name="Pinel N."/>
            <person name="Gabster J.A."/>
            <person name="Dehal P.S."/>
            <person name="He Z."/>
            <person name="Yang Z.K."/>
            <person name="Yen H.C."/>
            <person name="Zhou J."/>
            <person name="Wall J.D."/>
            <person name="Hazen T.C."/>
            <person name="Arkin A.P."/>
            <person name="Stahl D.A."/>
        </authorList>
    </citation>
    <scope>NUCLEOTIDE SEQUENCE [LARGE SCALE GENOMIC DNA]</scope>
    <source>
        <strain>DP4</strain>
    </source>
</reference>
<protein>
    <recommendedName>
        <fullName evidence="1">4-hydroxy-tetrahydrodipicolinate synthase</fullName>
        <shortName evidence="1">HTPA synthase</shortName>
        <ecNumber evidence="1">4.3.3.7</ecNumber>
    </recommendedName>
</protein>
<sequence>MQFTGAFTAIVTPFRNGRVDEERFRELIEWQIEQGINGLVPCGTTGESATLSHDEHRDVIRICVEQVKGRIPVLAGAGSNNTREAIDLTRFAKEAGADGALLITPYYNKPTQEGLYLHFKAIASEVSMPFIVYNVPSRTGTNICPETLARLNRDIPEVVGVKEATGNLIQVSEILEYCGTDFQVLSGDDFTVLPLLSVGGCGVISVTSNVVPAKMSDMCRAFKAGDLATARRLHFELSPINRAMFLETNPIPVKTALALMGRIDLEMRLPLCPLQQVNQSRLRDILAAAGIL</sequence>
<proteinExistence type="inferred from homology"/>
<comment type="function">
    <text evidence="1">Catalyzes the condensation of (S)-aspartate-beta-semialdehyde [(S)-ASA] and pyruvate to 4-hydroxy-tetrahydrodipicolinate (HTPA).</text>
</comment>
<comment type="catalytic activity">
    <reaction evidence="1">
        <text>L-aspartate 4-semialdehyde + pyruvate = (2S,4S)-4-hydroxy-2,3,4,5-tetrahydrodipicolinate + H2O + H(+)</text>
        <dbReference type="Rhea" id="RHEA:34171"/>
        <dbReference type="ChEBI" id="CHEBI:15361"/>
        <dbReference type="ChEBI" id="CHEBI:15377"/>
        <dbReference type="ChEBI" id="CHEBI:15378"/>
        <dbReference type="ChEBI" id="CHEBI:67139"/>
        <dbReference type="ChEBI" id="CHEBI:537519"/>
        <dbReference type="EC" id="4.3.3.7"/>
    </reaction>
</comment>
<comment type="pathway">
    <text evidence="1">Amino-acid biosynthesis; L-lysine biosynthesis via DAP pathway; (S)-tetrahydrodipicolinate from L-aspartate: step 3/4.</text>
</comment>
<comment type="subunit">
    <text evidence="1">Homotetramer; dimer of dimers.</text>
</comment>
<comment type="subcellular location">
    <subcellularLocation>
        <location evidence="1">Cytoplasm</location>
    </subcellularLocation>
</comment>
<comment type="similarity">
    <text evidence="1">Belongs to the DapA family.</text>
</comment>
<comment type="caution">
    <text evidence="2">Was originally thought to be a dihydrodipicolinate synthase (DHDPS), catalyzing the condensation of (S)-aspartate-beta-semialdehyde [(S)-ASA] and pyruvate to dihydrodipicolinate (DHDP). However, it was shown in E.coli that the product of the enzymatic reaction is not dihydrodipicolinate but in fact (4S)-4-hydroxy-2,3,4,5-tetrahydro-(2S)-dipicolinic acid (HTPA), and that the consecutive dehydration reaction leading to DHDP is not spontaneous but catalyzed by DapB.</text>
</comment>
<evidence type="ECO:0000255" key="1">
    <source>
        <dbReference type="HAMAP-Rule" id="MF_00418"/>
    </source>
</evidence>
<evidence type="ECO:0000305" key="2"/>
<name>DAPA_NITV4</name>